<name>ATPA_SYNWW</name>
<feature type="chain" id="PRO_0000302711" description="ATP synthase subunit alpha">
    <location>
        <begin position="1"/>
        <end position="504"/>
    </location>
</feature>
<feature type="binding site" evidence="1">
    <location>
        <begin position="169"/>
        <end position="176"/>
    </location>
    <ligand>
        <name>ATP</name>
        <dbReference type="ChEBI" id="CHEBI:30616"/>
    </ligand>
</feature>
<feature type="site" description="Required for activity" evidence="1">
    <location>
        <position position="364"/>
    </location>
</feature>
<gene>
    <name evidence="1" type="primary">atpA</name>
    <name type="ordered locus">Swol_2384</name>
</gene>
<keyword id="KW-0066">ATP synthesis</keyword>
<keyword id="KW-0067">ATP-binding</keyword>
<keyword id="KW-1003">Cell membrane</keyword>
<keyword id="KW-0139">CF(1)</keyword>
<keyword id="KW-0375">Hydrogen ion transport</keyword>
<keyword id="KW-0406">Ion transport</keyword>
<keyword id="KW-0472">Membrane</keyword>
<keyword id="KW-0547">Nucleotide-binding</keyword>
<keyword id="KW-1185">Reference proteome</keyword>
<keyword id="KW-1278">Translocase</keyword>
<keyword id="KW-0813">Transport</keyword>
<evidence type="ECO:0000255" key="1">
    <source>
        <dbReference type="HAMAP-Rule" id="MF_01346"/>
    </source>
</evidence>
<sequence>MSIRPEEISAILKEQIERYQSEVEVSNVGSVIYVGDGIARVYGLQGAMAGELLEFTGGTFGMVLNLEEDNVGAVLLGEYNHIKEGDVVKATGRIMEVPAGSAMLGRVVNALGQPIDGKGPINTTAFRPLEKVAHGVVTRQPVTTPMQTGLKAIDSMVPIGRGQRELIIGDRQIGKTAIALDSIINQREKKDLICIYVAVGQKQASIAGIAAKFEEMGAMDYTIIVAATASEPAPLLYMAPYAGVAMAEEFMEAEGKDVLIIYDDLSKHAVAYREMSLLLRRPPGREAYPGDVFYLHSRLLERACRLNPDHGGGSITALPIIETQAGDVSAYIPTNVISITDGQIYLEADMFNAGQRPAVNAGLSVSRVGGSAQTKAMKSVAGQLRLDLAQYRELAAFAQFGSDLDKATLARLTRGERVTEILKQGQYQPMPVQEQVVSIYSGVNGYLDDIPRDKVGEFEVDFLKFMRSANADVLNAIKDTGKIDDATEQKLIKAINEFKSTFAV</sequence>
<protein>
    <recommendedName>
        <fullName evidence="1">ATP synthase subunit alpha</fullName>
        <ecNumber evidence="1">7.1.2.2</ecNumber>
    </recommendedName>
    <alternativeName>
        <fullName evidence="1">ATP synthase F1 sector subunit alpha</fullName>
    </alternativeName>
    <alternativeName>
        <fullName evidence="1">F-ATPase subunit alpha</fullName>
    </alternativeName>
</protein>
<comment type="function">
    <text evidence="1">Produces ATP from ADP in the presence of a proton gradient across the membrane. The alpha chain is a regulatory subunit.</text>
</comment>
<comment type="catalytic activity">
    <reaction evidence="1">
        <text>ATP + H2O + 4 H(+)(in) = ADP + phosphate + 5 H(+)(out)</text>
        <dbReference type="Rhea" id="RHEA:57720"/>
        <dbReference type="ChEBI" id="CHEBI:15377"/>
        <dbReference type="ChEBI" id="CHEBI:15378"/>
        <dbReference type="ChEBI" id="CHEBI:30616"/>
        <dbReference type="ChEBI" id="CHEBI:43474"/>
        <dbReference type="ChEBI" id="CHEBI:456216"/>
        <dbReference type="EC" id="7.1.2.2"/>
    </reaction>
</comment>
<comment type="subunit">
    <text evidence="1">F-type ATPases have 2 components, CF(1) - the catalytic core - and CF(0) - the membrane proton channel. CF(1) has five subunits: alpha(3), beta(3), gamma(1), delta(1), epsilon(1). CF(0) has three main subunits: a(1), b(2) and c(9-12). The alpha and beta chains form an alternating ring which encloses part of the gamma chain. CF(1) is attached to CF(0) by a central stalk formed by the gamma and epsilon chains, while a peripheral stalk is formed by the delta and b chains.</text>
</comment>
<comment type="subcellular location">
    <subcellularLocation>
        <location evidence="1">Cell membrane</location>
        <topology evidence="1">Peripheral membrane protein</topology>
    </subcellularLocation>
</comment>
<comment type="similarity">
    <text evidence="1">Belongs to the ATPase alpha/beta chains family.</text>
</comment>
<organism>
    <name type="scientific">Syntrophomonas wolfei subsp. wolfei (strain DSM 2245B / Goettingen)</name>
    <dbReference type="NCBI Taxonomy" id="335541"/>
    <lineage>
        <taxon>Bacteria</taxon>
        <taxon>Bacillati</taxon>
        <taxon>Bacillota</taxon>
        <taxon>Clostridia</taxon>
        <taxon>Eubacteriales</taxon>
        <taxon>Syntrophomonadaceae</taxon>
        <taxon>Syntrophomonas</taxon>
    </lineage>
</organism>
<reference key="1">
    <citation type="journal article" date="2010" name="Environ. Microbiol.">
        <title>The genome of Syntrophomonas wolfei: new insights into syntrophic metabolism and biohydrogen production.</title>
        <authorList>
            <person name="Sieber J.R."/>
            <person name="Sims D.R."/>
            <person name="Han C."/>
            <person name="Kim E."/>
            <person name="Lykidis A."/>
            <person name="Lapidus A.L."/>
            <person name="McDonnald E."/>
            <person name="Rohlin L."/>
            <person name="Culley D.E."/>
            <person name="Gunsalus R."/>
            <person name="McInerney M.J."/>
        </authorList>
    </citation>
    <scope>NUCLEOTIDE SEQUENCE [LARGE SCALE GENOMIC DNA]</scope>
    <source>
        <strain>DSM 2245B / Goettingen</strain>
    </source>
</reference>
<proteinExistence type="inferred from homology"/>
<accession>Q0AUD1</accession>
<dbReference type="EC" id="7.1.2.2" evidence="1"/>
<dbReference type="EMBL" id="CP000448">
    <property type="protein sequence ID" value="ABI69673.1"/>
    <property type="molecule type" value="Genomic_DNA"/>
</dbReference>
<dbReference type="RefSeq" id="WP_011641757.1">
    <property type="nucleotide sequence ID" value="NC_008346.1"/>
</dbReference>
<dbReference type="SMR" id="Q0AUD1"/>
<dbReference type="STRING" id="335541.Swol_2384"/>
<dbReference type="KEGG" id="swo:Swol_2384"/>
<dbReference type="eggNOG" id="COG0056">
    <property type="taxonomic scope" value="Bacteria"/>
</dbReference>
<dbReference type="HOGENOM" id="CLU_010091_2_1_9"/>
<dbReference type="OrthoDB" id="9803053at2"/>
<dbReference type="Proteomes" id="UP000001968">
    <property type="component" value="Chromosome"/>
</dbReference>
<dbReference type="GO" id="GO:0005886">
    <property type="term" value="C:plasma membrane"/>
    <property type="evidence" value="ECO:0007669"/>
    <property type="project" value="UniProtKB-SubCell"/>
</dbReference>
<dbReference type="GO" id="GO:0045259">
    <property type="term" value="C:proton-transporting ATP synthase complex"/>
    <property type="evidence" value="ECO:0007669"/>
    <property type="project" value="UniProtKB-KW"/>
</dbReference>
<dbReference type="GO" id="GO:0043531">
    <property type="term" value="F:ADP binding"/>
    <property type="evidence" value="ECO:0007669"/>
    <property type="project" value="TreeGrafter"/>
</dbReference>
<dbReference type="GO" id="GO:0005524">
    <property type="term" value="F:ATP binding"/>
    <property type="evidence" value="ECO:0007669"/>
    <property type="project" value="UniProtKB-UniRule"/>
</dbReference>
<dbReference type="GO" id="GO:0046933">
    <property type="term" value="F:proton-transporting ATP synthase activity, rotational mechanism"/>
    <property type="evidence" value="ECO:0007669"/>
    <property type="project" value="UniProtKB-UniRule"/>
</dbReference>
<dbReference type="CDD" id="cd18113">
    <property type="entry name" value="ATP-synt_F1_alpha_C"/>
    <property type="match status" value="1"/>
</dbReference>
<dbReference type="CDD" id="cd18116">
    <property type="entry name" value="ATP-synt_F1_alpha_N"/>
    <property type="match status" value="1"/>
</dbReference>
<dbReference type="CDD" id="cd01132">
    <property type="entry name" value="F1-ATPase_alpha_CD"/>
    <property type="match status" value="1"/>
</dbReference>
<dbReference type="FunFam" id="1.20.150.20:FF:000001">
    <property type="entry name" value="ATP synthase subunit alpha"/>
    <property type="match status" value="1"/>
</dbReference>
<dbReference type="FunFam" id="2.40.30.20:FF:000001">
    <property type="entry name" value="ATP synthase subunit alpha"/>
    <property type="match status" value="1"/>
</dbReference>
<dbReference type="FunFam" id="3.40.50.300:FF:000002">
    <property type="entry name" value="ATP synthase subunit alpha"/>
    <property type="match status" value="1"/>
</dbReference>
<dbReference type="Gene3D" id="2.40.30.20">
    <property type="match status" value="1"/>
</dbReference>
<dbReference type="Gene3D" id="1.20.150.20">
    <property type="entry name" value="ATP synthase alpha/beta chain, C-terminal domain"/>
    <property type="match status" value="1"/>
</dbReference>
<dbReference type="Gene3D" id="3.40.50.300">
    <property type="entry name" value="P-loop containing nucleotide triphosphate hydrolases"/>
    <property type="match status" value="1"/>
</dbReference>
<dbReference type="HAMAP" id="MF_01346">
    <property type="entry name" value="ATP_synth_alpha_bact"/>
    <property type="match status" value="1"/>
</dbReference>
<dbReference type="InterPro" id="IPR023366">
    <property type="entry name" value="ATP_synth_asu-like_sf"/>
</dbReference>
<dbReference type="InterPro" id="IPR000793">
    <property type="entry name" value="ATP_synth_asu_C"/>
</dbReference>
<dbReference type="InterPro" id="IPR038376">
    <property type="entry name" value="ATP_synth_asu_C_sf"/>
</dbReference>
<dbReference type="InterPro" id="IPR033732">
    <property type="entry name" value="ATP_synth_F1_a_nt-bd_dom"/>
</dbReference>
<dbReference type="InterPro" id="IPR005294">
    <property type="entry name" value="ATP_synth_F1_asu"/>
</dbReference>
<dbReference type="InterPro" id="IPR020003">
    <property type="entry name" value="ATPase_a/bsu_AS"/>
</dbReference>
<dbReference type="InterPro" id="IPR004100">
    <property type="entry name" value="ATPase_F1/V1/A1_a/bsu_N"/>
</dbReference>
<dbReference type="InterPro" id="IPR036121">
    <property type="entry name" value="ATPase_F1/V1/A1_a/bsu_N_sf"/>
</dbReference>
<dbReference type="InterPro" id="IPR000194">
    <property type="entry name" value="ATPase_F1/V1/A1_a/bsu_nucl-bd"/>
</dbReference>
<dbReference type="InterPro" id="IPR027417">
    <property type="entry name" value="P-loop_NTPase"/>
</dbReference>
<dbReference type="NCBIfam" id="TIGR00962">
    <property type="entry name" value="atpA"/>
    <property type="match status" value="1"/>
</dbReference>
<dbReference type="NCBIfam" id="NF009884">
    <property type="entry name" value="PRK13343.1"/>
    <property type="match status" value="1"/>
</dbReference>
<dbReference type="PANTHER" id="PTHR48082">
    <property type="entry name" value="ATP SYNTHASE SUBUNIT ALPHA, MITOCHONDRIAL"/>
    <property type="match status" value="1"/>
</dbReference>
<dbReference type="PANTHER" id="PTHR48082:SF2">
    <property type="entry name" value="ATP SYNTHASE SUBUNIT ALPHA, MITOCHONDRIAL"/>
    <property type="match status" value="1"/>
</dbReference>
<dbReference type="Pfam" id="PF00006">
    <property type="entry name" value="ATP-synt_ab"/>
    <property type="match status" value="1"/>
</dbReference>
<dbReference type="Pfam" id="PF00306">
    <property type="entry name" value="ATP-synt_ab_C"/>
    <property type="match status" value="1"/>
</dbReference>
<dbReference type="Pfam" id="PF02874">
    <property type="entry name" value="ATP-synt_ab_N"/>
    <property type="match status" value="1"/>
</dbReference>
<dbReference type="PIRSF" id="PIRSF039088">
    <property type="entry name" value="F_ATPase_subunit_alpha"/>
    <property type="match status" value="1"/>
</dbReference>
<dbReference type="SUPFAM" id="SSF47917">
    <property type="entry name" value="C-terminal domain of alpha and beta subunits of F1 ATP synthase"/>
    <property type="match status" value="1"/>
</dbReference>
<dbReference type="SUPFAM" id="SSF50615">
    <property type="entry name" value="N-terminal domain of alpha and beta subunits of F1 ATP synthase"/>
    <property type="match status" value="1"/>
</dbReference>
<dbReference type="SUPFAM" id="SSF52540">
    <property type="entry name" value="P-loop containing nucleoside triphosphate hydrolases"/>
    <property type="match status" value="1"/>
</dbReference>
<dbReference type="PROSITE" id="PS00152">
    <property type="entry name" value="ATPASE_ALPHA_BETA"/>
    <property type="match status" value="1"/>
</dbReference>